<reference key="1">
    <citation type="journal article" date="1997" name="Nature">
        <title>The nucleotide sequence of Saccharomyces cerevisiae chromosome IV.</title>
        <authorList>
            <person name="Jacq C."/>
            <person name="Alt-Moerbe J."/>
            <person name="Andre B."/>
            <person name="Arnold W."/>
            <person name="Bahr A."/>
            <person name="Ballesta J.P.G."/>
            <person name="Bargues M."/>
            <person name="Baron L."/>
            <person name="Becker A."/>
            <person name="Biteau N."/>
            <person name="Bloecker H."/>
            <person name="Blugeon C."/>
            <person name="Boskovic J."/>
            <person name="Brandt P."/>
            <person name="Brueckner M."/>
            <person name="Buitrago M.J."/>
            <person name="Coster F."/>
            <person name="Delaveau T."/>
            <person name="del Rey F."/>
            <person name="Dujon B."/>
            <person name="Eide L.G."/>
            <person name="Garcia-Cantalejo J.M."/>
            <person name="Goffeau A."/>
            <person name="Gomez-Peris A."/>
            <person name="Granotier C."/>
            <person name="Hanemann V."/>
            <person name="Hankeln T."/>
            <person name="Hoheisel J.D."/>
            <person name="Jaeger W."/>
            <person name="Jimenez A."/>
            <person name="Jonniaux J.-L."/>
            <person name="Kraemer C."/>
            <person name="Kuester H."/>
            <person name="Laamanen P."/>
            <person name="Legros Y."/>
            <person name="Louis E.J."/>
            <person name="Moeller-Rieker S."/>
            <person name="Monnet A."/>
            <person name="Moro M."/>
            <person name="Mueller-Auer S."/>
            <person name="Nussbaumer B."/>
            <person name="Paricio N."/>
            <person name="Paulin L."/>
            <person name="Perea J."/>
            <person name="Perez-Alonso M."/>
            <person name="Perez-Ortin J.E."/>
            <person name="Pohl T.M."/>
            <person name="Prydz H."/>
            <person name="Purnelle B."/>
            <person name="Rasmussen S.W."/>
            <person name="Remacha M.A."/>
            <person name="Revuelta J.L."/>
            <person name="Rieger M."/>
            <person name="Salom D."/>
            <person name="Saluz H.P."/>
            <person name="Saiz J.E."/>
            <person name="Saren A.-M."/>
            <person name="Schaefer M."/>
            <person name="Scharfe M."/>
            <person name="Schmidt E.R."/>
            <person name="Schneider C."/>
            <person name="Scholler P."/>
            <person name="Schwarz S."/>
            <person name="Soler-Mira A."/>
            <person name="Urrestarazu L.A."/>
            <person name="Verhasselt P."/>
            <person name="Vissers S."/>
            <person name="Voet M."/>
            <person name="Volckaert G."/>
            <person name="Wagner G."/>
            <person name="Wambutt R."/>
            <person name="Wedler E."/>
            <person name="Wedler H."/>
            <person name="Woelfl S."/>
            <person name="Harris D.E."/>
            <person name="Bowman S."/>
            <person name="Brown D."/>
            <person name="Churcher C.M."/>
            <person name="Connor R."/>
            <person name="Dedman K."/>
            <person name="Gentles S."/>
            <person name="Hamlin N."/>
            <person name="Hunt S."/>
            <person name="Jones L."/>
            <person name="McDonald S."/>
            <person name="Murphy L.D."/>
            <person name="Niblett D."/>
            <person name="Odell C."/>
            <person name="Oliver K."/>
            <person name="Rajandream M.A."/>
            <person name="Richards C."/>
            <person name="Shore L."/>
            <person name="Walsh S.V."/>
            <person name="Barrell B.G."/>
            <person name="Dietrich F.S."/>
            <person name="Mulligan J.T."/>
            <person name="Allen E."/>
            <person name="Araujo R."/>
            <person name="Aviles E."/>
            <person name="Berno A."/>
            <person name="Carpenter J."/>
            <person name="Chen E."/>
            <person name="Cherry J.M."/>
            <person name="Chung E."/>
            <person name="Duncan M."/>
            <person name="Hunicke-Smith S."/>
            <person name="Hyman R.W."/>
            <person name="Komp C."/>
            <person name="Lashkari D."/>
            <person name="Lew H."/>
            <person name="Lin D."/>
            <person name="Mosedale D."/>
            <person name="Nakahara K."/>
            <person name="Namath A."/>
            <person name="Oefner P."/>
            <person name="Oh C."/>
            <person name="Petel F.X."/>
            <person name="Roberts D."/>
            <person name="Schramm S."/>
            <person name="Schroeder M."/>
            <person name="Shogren T."/>
            <person name="Shroff N."/>
            <person name="Winant A."/>
            <person name="Yelton M.A."/>
            <person name="Botstein D."/>
            <person name="Davis R.W."/>
            <person name="Johnston M."/>
            <person name="Andrews S."/>
            <person name="Brinkman R."/>
            <person name="Cooper J."/>
            <person name="Ding H."/>
            <person name="Du Z."/>
            <person name="Favello A."/>
            <person name="Fulton L."/>
            <person name="Gattung S."/>
            <person name="Greco T."/>
            <person name="Hallsworth K."/>
            <person name="Hawkins J."/>
            <person name="Hillier L.W."/>
            <person name="Jier M."/>
            <person name="Johnson D."/>
            <person name="Johnston L."/>
            <person name="Kirsten J."/>
            <person name="Kucaba T."/>
            <person name="Langston Y."/>
            <person name="Latreille P."/>
            <person name="Le T."/>
            <person name="Mardis E."/>
            <person name="Menezes S."/>
            <person name="Miller N."/>
            <person name="Nhan M."/>
            <person name="Pauley A."/>
            <person name="Peluso D."/>
            <person name="Rifkin L."/>
            <person name="Riles L."/>
            <person name="Taich A."/>
            <person name="Trevaskis E."/>
            <person name="Vignati D."/>
            <person name="Wilcox L."/>
            <person name="Wohldman P."/>
            <person name="Vaudin M."/>
            <person name="Wilson R."/>
            <person name="Waterston R."/>
            <person name="Albermann K."/>
            <person name="Hani J."/>
            <person name="Heumann K."/>
            <person name="Kleine K."/>
            <person name="Mewes H.-W."/>
            <person name="Zollner A."/>
            <person name="Zaccaria P."/>
        </authorList>
    </citation>
    <scope>NUCLEOTIDE SEQUENCE [LARGE SCALE GENOMIC DNA]</scope>
    <source>
        <strain>ATCC 204508 / S288c</strain>
    </source>
</reference>
<reference key="2">
    <citation type="journal article" date="2014" name="G3 (Bethesda)">
        <title>The reference genome sequence of Saccharomyces cerevisiae: Then and now.</title>
        <authorList>
            <person name="Engel S.R."/>
            <person name="Dietrich F.S."/>
            <person name="Fisk D.G."/>
            <person name="Binkley G."/>
            <person name="Balakrishnan R."/>
            <person name="Costanzo M.C."/>
            <person name="Dwight S.S."/>
            <person name="Hitz B.C."/>
            <person name="Karra K."/>
            <person name="Nash R.S."/>
            <person name="Weng S."/>
            <person name="Wong E.D."/>
            <person name="Lloyd P."/>
            <person name="Skrzypek M.S."/>
            <person name="Miyasato S.R."/>
            <person name="Simison M."/>
            <person name="Cherry J.M."/>
        </authorList>
    </citation>
    <scope>GENOME REANNOTATION</scope>
    <source>
        <strain>ATCC 204508 / S288c</strain>
    </source>
</reference>
<reference key="3">
    <citation type="journal article" date="2003" name="Genome Res.">
        <title>Systematic discovery of new genes in the Saccharomyces cerevisiae genome.</title>
        <authorList>
            <person name="Kessler M.M."/>
            <person name="Zeng Q."/>
            <person name="Hogan S."/>
            <person name="Cook R."/>
            <person name="Morales A.J."/>
            <person name="Cottarel G."/>
        </authorList>
    </citation>
    <scope>GENOME REANNOTATION</scope>
</reference>
<proteinExistence type="predicted"/>
<organism>
    <name type="scientific">Saccharomyces cerevisiae (strain ATCC 204508 / S288c)</name>
    <name type="common">Baker's yeast</name>
    <dbReference type="NCBI Taxonomy" id="559292"/>
    <lineage>
        <taxon>Eukaryota</taxon>
        <taxon>Fungi</taxon>
        <taxon>Dikarya</taxon>
        <taxon>Ascomycota</taxon>
        <taxon>Saccharomycotina</taxon>
        <taxon>Saccharomycetes</taxon>
        <taxon>Saccharomycetales</taxon>
        <taxon>Saccharomycetaceae</taxon>
        <taxon>Saccharomyces</taxon>
    </lineage>
</organism>
<name>YD194_YEAST</name>
<keyword id="KW-1185">Reference proteome</keyword>
<sequence>MKQMMIEASISKDTLRLLICFFEIKQCHISLQPTCYYQNWVRYSSIYYQL</sequence>
<protein>
    <recommendedName>
        <fullName>Uncharacterized protein YDR194W-A</fullName>
    </recommendedName>
</protein>
<gene>
    <name type="ordered locus">YDR194W-A</name>
    <name type="ORF">smORF123</name>
</gene>
<feature type="chain" id="PRO_0000253836" description="Uncharacterized protein YDR194W-A">
    <location>
        <begin position="1"/>
        <end position="50"/>
    </location>
</feature>
<accession>Q3E818</accession>
<accession>D6VSH7</accession>
<dbReference type="EMBL" id="Z48784">
    <property type="status" value="NOT_ANNOTATED_CDS"/>
    <property type="molecule type" value="Genomic_DNA"/>
</dbReference>
<dbReference type="EMBL" id="BK006938">
    <property type="protein sequence ID" value="DAA12037.1"/>
    <property type="molecule type" value="Genomic_DNA"/>
</dbReference>
<dbReference type="RefSeq" id="NP_878064.1">
    <property type="nucleotide sequence ID" value="NM_001184546.1"/>
</dbReference>
<dbReference type="BioGRID" id="36977">
    <property type="interactions" value="16"/>
</dbReference>
<dbReference type="FunCoup" id="Q3E818">
    <property type="interactions" value="7"/>
</dbReference>
<dbReference type="STRING" id="4932.YDR194W-A"/>
<dbReference type="PaxDb" id="4932-YDR194W-A"/>
<dbReference type="EnsemblFungi" id="YDR194W-A_mRNA">
    <property type="protein sequence ID" value="YDR194W-A"/>
    <property type="gene ID" value="YDR194W-A"/>
</dbReference>
<dbReference type="GeneID" id="1466435"/>
<dbReference type="KEGG" id="sce:YDR194W-A"/>
<dbReference type="AGR" id="SGD:S000028541"/>
<dbReference type="SGD" id="S000028541">
    <property type="gene designation" value="YDR194W-A"/>
</dbReference>
<dbReference type="VEuPathDB" id="FungiDB:YDR194W-A"/>
<dbReference type="HOGENOM" id="CLU_3126150_0_0_1"/>
<dbReference type="InParanoid" id="Q3E818"/>
<dbReference type="OrthoDB" id="10270113at2759"/>
<dbReference type="BioCyc" id="YEAST:G3O-30118-MONOMER"/>
<dbReference type="BioGRID-ORCS" id="1466435">
    <property type="hits" value="0 hits in 10 CRISPR screens"/>
</dbReference>
<dbReference type="PRO" id="PR:Q3E818"/>
<dbReference type="Proteomes" id="UP000002311">
    <property type="component" value="Chromosome IV"/>
</dbReference>